<dbReference type="EMBL" id="CH408044">
    <property type="protein sequence ID" value="EDV10077.1"/>
    <property type="status" value="ALT_INIT"/>
    <property type="molecule type" value="Genomic_DNA"/>
</dbReference>
<dbReference type="SMR" id="B3LI56"/>
<dbReference type="HOGENOM" id="CLU_147520_0_0_1"/>
<dbReference type="OrthoDB" id="7422at4893"/>
<dbReference type="Proteomes" id="UP000008335">
    <property type="component" value="Unassembled WGS sequence"/>
</dbReference>
<dbReference type="GO" id="GO:0005743">
    <property type="term" value="C:mitochondrial inner membrane"/>
    <property type="evidence" value="ECO:0007669"/>
    <property type="project" value="UniProtKB-SubCell"/>
</dbReference>
<dbReference type="GO" id="GO:0034551">
    <property type="term" value="P:mitochondrial respiratory chain complex III assembly"/>
    <property type="evidence" value="ECO:0007669"/>
    <property type="project" value="TreeGrafter"/>
</dbReference>
<dbReference type="InterPro" id="IPR012420">
    <property type="entry name" value="Cbp4"/>
</dbReference>
<dbReference type="PANTHER" id="PTHR28202">
    <property type="entry name" value="ASSEMBLY FACTOR CBP4"/>
    <property type="match status" value="1"/>
</dbReference>
<dbReference type="PANTHER" id="PTHR28202:SF1">
    <property type="entry name" value="ASSEMBLY FACTOR CBP4"/>
    <property type="match status" value="1"/>
</dbReference>
<dbReference type="Pfam" id="PF07960">
    <property type="entry name" value="CBP4"/>
    <property type="match status" value="1"/>
</dbReference>
<reference key="1">
    <citation type="submission" date="2005-03" db="EMBL/GenBank/DDBJ databases">
        <title>Annotation of the Saccharomyces cerevisiae RM11-1a genome.</title>
        <authorList>
            <consortium name="The Broad Institute Genome Sequencing Platform"/>
            <person name="Birren B.W."/>
            <person name="Lander E.S."/>
            <person name="Galagan J.E."/>
            <person name="Nusbaum C."/>
            <person name="Devon K."/>
            <person name="Cuomo C."/>
            <person name="Jaffe D.B."/>
            <person name="Butler J."/>
            <person name="Alvarez P."/>
            <person name="Gnerre S."/>
            <person name="Grabherr M."/>
            <person name="Kleber M."/>
            <person name="Mauceli E.W."/>
            <person name="Brockman W."/>
            <person name="MacCallum I.A."/>
            <person name="Rounsley S."/>
            <person name="Young S.K."/>
            <person name="LaButti K."/>
            <person name="Pushparaj V."/>
            <person name="DeCaprio D."/>
            <person name="Crawford M."/>
            <person name="Koehrsen M."/>
            <person name="Engels R."/>
            <person name="Montgomery P."/>
            <person name="Pearson M."/>
            <person name="Howarth C."/>
            <person name="Larson L."/>
            <person name="Luoma S."/>
            <person name="White J."/>
            <person name="O'Leary S."/>
            <person name="Kodira C.D."/>
            <person name="Zeng Q."/>
            <person name="Yandava C."/>
            <person name="Alvarado L."/>
            <person name="Pratt S."/>
            <person name="Kruglyak L."/>
        </authorList>
    </citation>
    <scope>NUCLEOTIDE SEQUENCE [LARGE SCALE GENOMIC DNA]</scope>
    <source>
        <strain>RM11-1a</strain>
    </source>
</reference>
<evidence type="ECO:0000250" key="1"/>
<evidence type="ECO:0000255" key="2"/>
<evidence type="ECO:0000256" key="3">
    <source>
        <dbReference type="SAM" id="MobiDB-lite"/>
    </source>
</evidence>
<evidence type="ECO:0000305" key="4"/>
<protein>
    <recommendedName>
        <fullName>Assembly factor CBP4</fullName>
    </recommendedName>
    <alternativeName>
        <fullName>Cytochrome b mRNA-processing protein 4</fullName>
    </alternativeName>
</protein>
<keyword id="KW-0143">Chaperone</keyword>
<keyword id="KW-0472">Membrane</keyword>
<keyword id="KW-0496">Mitochondrion</keyword>
<keyword id="KW-0999">Mitochondrion inner membrane</keyword>
<keyword id="KW-0812">Transmembrane</keyword>
<keyword id="KW-1133">Transmembrane helix</keyword>
<comment type="function">
    <text evidence="1">Essential for the assembly of ubiquinol-cytochrome c reductase. It has a direct effect on the correct occurrence of the Rieske protein, core 4, core 5 and apocytochrome b (By similarity).</text>
</comment>
<comment type="subcellular location">
    <subcellularLocation>
        <location evidence="1">Mitochondrion inner membrane</location>
        <topology evidence="1">Single-pass membrane protein</topology>
    </subcellularLocation>
</comment>
<comment type="similarity">
    <text evidence="4">Belongs to the CBP4 family.</text>
</comment>
<comment type="sequence caution" evidence="4">
    <conflict type="erroneous initiation">
        <sequence resource="EMBL-CDS" id="EDV10077"/>
    </conflict>
</comment>
<organism>
    <name type="scientific">Saccharomyces cerevisiae (strain RM11-1a)</name>
    <name type="common">Baker's yeast</name>
    <dbReference type="NCBI Taxonomy" id="285006"/>
    <lineage>
        <taxon>Eukaryota</taxon>
        <taxon>Fungi</taxon>
        <taxon>Dikarya</taxon>
        <taxon>Ascomycota</taxon>
        <taxon>Saccharomycotina</taxon>
        <taxon>Saccharomycetes</taxon>
        <taxon>Saccharomycetales</taxon>
        <taxon>Saccharomycetaceae</taxon>
        <taxon>Saccharomyces</taxon>
    </lineage>
</organism>
<sequence>MERPLWVRWLKVYAIGGAIIGSGFLLFKYTTPTDQQLISQLSPELRLQYEREKKLRQSEQQALMKIVKETSQSDDPIWKTGPLQSPWERNGDNVQSRDHFAKVRAEEVQKEELARIRNELSQLRSETEEKTKEIVQDKQVKSWWRFW</sequence>
<name>CBP4_YEAS1</name>
<accession>B3LI56</accession>
<proteinExistence type="inferred from homology"/>
<gene>
    <name type="primary">CBP4</name>
    <name type="ORF">SCRG_00846</name>
</gene>
<feature type="chain" id="PRO_0000392083" description="Assembly factor CBP4">
    <location>
        <begin position="1"/>
        <end position="147"/>
    </location>
</feature>
<feature type="transmembrane region" description="Helical" evidence="2">
    <location>
        <begin position="5"/>
        <end position="27"/>
    </location>
</feature>
<feature type="region of interest" description="Disordered" evidence="3">
    <location>
        <begin position="73"/>
        <end position="94"/>
    </location>
</feature>